<accession>P12726</accession>
<organismHost>
    <name type="scientific">Escherichia coli</name>
    <dbReference type="NCBI Taxonomy" id="562"/>
</organismHost>
<feature type="chain" id="PRO_0000460672" description="NAD(+)--arginine ADP-ribosyltransferase" evidence="1">
    <location>
        <begin position="1"/>
        <end position="682"/>
    </location>
</feature>
<feature type="chain" id="PRO_0000003323" description="Mature NAD(+)--arginine ADP-ribosyltransferase" evidence="1">
    <location>
        <begin position="7"/>
        <end position="619"/>
    </location>
</feature>
<feature type="domain" description="TR mART core" evidence="2">
    <location>
        <begin position="383"/>
        <end position="614"/>
    </location>
</feature>
<feature type="active site" evidence="2">
    <location>
        <position position="478"/>
    </location>
</feature>
<feature type="active site" evidence="2">
    <location>
        <position position="503"/>
    </location>
</feature>
<feature type="active site" evidence="2">
    <location>
        <position position="576"/>
    </location>
</feature>
<feature type="site" description="Cleavage" evidence="1 9">
    <location>
        <begin position="6"/>
        <end position="7"/>
    </location>
</feature>
<feature type="site" description="Cleavage" evidence="1 11">
    <location>
        <begin position="619"/>
        <end position="620"/>
    </location>
</feature>
<feature type="sequence conflict" description="In Ref. 1; CAA33807." evidence="13" ref="1">
    <original>KKKIPQIFSVHVDDAIE</original>
    <variation>RRKYRKFFQFMLMMQLN</variation>
    <location>
        <begin position="22"/>
        <end position="38"/>
    </location>
</feature>
<feature type="sequence conflict" description="In Ref. 1; CAA33807." evidence="13" ref="1">
    <original>A</original>
    <variation>G</variation>
    <location>
        <position position="266"/>
    </location>
</feature>
<feature type="sequence conflict" description="In Ref. 1; CAA33807." evidence="13" ref="1">
    <original>K</original>
    <variation>R</variation>
    <location>
        <position position="527"/>
    </location>
</feature>
<feature type="sequence conflict" description="In Ref. 1; CAA33807." evidence="13" ref="1">
    <original>T</original>
    <variation>LQ</variation>
    <location>
        <position position="636"/>
    </location>
</feature>
<feature type="sequence conflict" description="In Ref. 1; CAA33807." evidence="13" ref="1">
    <original>KVES</original>
    <variation>ESRNR</variation>
    <location>
        <begin position="658"/>
        <end position="661"/>
    </location>
</feature>
<feature type="sequence conflict" description="In Ref. 1; CAA33807." evidence="13" ref="1">
    <original>IIASC</original>
    <variation>NYLRLA</variation>
    <location>
        <begin position="665"/>
        <end position="669"/>
    </location>
</feature>
<gene>
    <name type="primary">alt</name>
</gene>
<dbReference type="EC" id="2.4.2.31" evidence="1 4 5"/>
<dbReference type="EMBL" id="X15811">
    <property type="protein sequence ID" value="CAA33807.1"/>
    <property type="molecule type" value="Genomic_DNA"/>
</dbReference>
<dbReference type="EMBL" id="AF158101">
    <property type="protein sequence ID" value="AAD42533.1"/>
    <property type="molecule type" value="Genomic_DNA"/>
</dbReference>
<dbReference type="PIR" id="JU0096">
    <property type="entry name" value="SXBPT4"/>
</dbReference>
<dbReference type="RefSeq" id="NP_049811.1">
    <property type="nucleotide sequence ID" value="NC_000866.4"/>
</dbReference>
<dbReference type="GeneID" id="1258760"/>
<dbReference type="KEGG" id="vg:1258760"/>
<dbReference type="OrthoDB" id="1983at10239"/>
<dbReference type="BRENDA" id="2.4.2.30">
    <property type="organism ID" value="732"/>
</dbReference>
<dbReference type="Proteomes" id="UP000009087">
    <property type="component" value="Segment"/>
</dbReference>
<dbReference type="GO" id="GO:0005576">
    <property type="term" value="C:extracellular region"/>
    <property type="evidence" value="ECO:0007669"/>
    <property type="project" value="InterPro"/>
</dbReference>
<dbReference type="GO" id="GO:0044423">
    <property type="term" value="C:virion component"/>
    <property type="evidence" value="ECO:0007669"/>
    <property type="project" value="UniProtKB-UniRule"/>
</dbReference>
<dbReference type="GO" id="GO:0106274">
    <property type="term" value="F:NAD+-protein-arginine ADP-ribosyltransferase activity"/>
    <property type="evidence" value="ECO:0000314"/>
    <property type="project" value="UniProtKB"/>
</dbReference>
<dbReference type="GO" id="GO:0016779">
    <property type="term" value="F:nucleotidyltransferase activity"/>
    <property type="evidence" value="ECO:0007669"/>
    <property type="project" value="UniProtKB-KW"/>
</dbReference>
<dbReference type="GO" id="GO:0046782">
    <property type="term" value="P:regulation of viral transcription"/>
    <property type="evidence" value="ECO:0000314"/>
    <property type="project" value="UniProtKB"/>
</dbReference>
<dbReference type="CDD" id="cd00233">
    <property type="entry name" value="VIP2"/>
    <property type="match status" value="1"/>
</dbReference>
<dbReference type="Gene3D" id="3.90.176.10">
    <property type="entry name" value="Toxin ADP-ribosyltransferase, Chain A, domain 1"/>
    <property type="match status" value="1"/>
</dbReference>
<dbReference type="HAMAP" id="MF_04139">
    <property type="entry name" value="ALT_T4"/>
    <property type="match status" value="1"/>
</dbReference>
<dbReference type="InterPro" id="IPR003540">
    <property type="entry name" value="ADP-ribosyltransferase"/>
</dbReference>
<dbReference type="InterPro" id="IPR016225">
    <property type="entry name" value="Phage_T4_Alt-like"/>
</dbReference>
<dbReference type="Pfam" id="PF03496">
    <property type="entry name" value="ADPrib_exo_Tox"/>
    <property type="match status" value="1"/>
</dbReference>
<dbReference type="PIRSF" id="PIRSF000491">
    <property type="entry name" value="Alt_phage"/>
    <property type="match status" value="1"/>
</dbReference>
<dbReference type="SUPFAM" id="SSF56399">
    <property type="entry name" value="ADP-ribosylation"/>
    <property type="match status" value="1"/>
</dbReference>
<dbReference type="PROSITE" id="PS51996">
    <property type="entry name" value="TR_MART"/>
    <property type="match status" value="1"/>
</dbReference>
<keyword id="KW-0328">Glycosyltransferase</keyword>
<keyword id="KW-0520">NAD</keyword>
<keyword id="KW-0548">Nucleotidyltransferase</keyword>
<keyword id="KW-1185">Reference proteome</keyword>
<keyword id="KW-0808">Transferase</keyword>
<keyword id="KW-0946">Virion</keyword>
<evidence type="ECO:0000255" key="1">
    <source>
        <dbReference type="HAMAP-Rule" id="MF_04139"/>
    </source>
</evidence>
<evidence type="ECO:0000255" key="2">
    <source>
        <dbReference type="PROSITE-ProRule" id="PRU01340"/>
    </source>
</evidence>
<evidence type="ECO:0000269" key="3">
    <source>
    </source>
</evidence>
<evidence type="ECO:0000269" key="4">
    <source>
    </source>
</evidence>
<evidence type="ECO:0000269" key="5">
    <source>
    </source>
</evidence>
<evidence type="ECO:0000269" key="6">
    <source>
    </source>
</evidence>
<evidence type="ECO:0000269" key="7">
    <source>
    </source>
</evidence>
<evidence type="ECO:0000269" key="8">
    <source>
    </source>
</evidence>
<evidence type="ECO:0000269" key="9">
    <source>
    </source>
</evidence>
<evidence type="ECO:0000269" key="10">
    <source>
    </source>
</evidence>
<evidence type="ECO:0000303" key="11">
    <source>
    </source>
</evidence>
<evidence type="ECO:0000303" key="12">
    <source>
    </source>
</evidence>
<evidence type="ECO:0000305" key="13"/>
<sequence>MELITELFDEDTTLPITNLYPKKKIPQIFSVHVDDAIEQPGFRLCTYTSGGDTNRDLKMGDKMMHIVPFTLTAKGSIAKLKGLGPSPINYINSVFTVAMQTMRQYKIDACMLRILKSKTAGQARQIQVIADRLIRSRSGGRYVLLKELWDYDKKYAYILIHRKNVSLEDIPGVPEISTELFTKVESKVGDVYINKDTGAQVTKNEAIAASIAQENDKRSDQAVIVKVKISRRAIAQSQSLESSRFETPMFQKFEASAAELNKPADAPLISDSNELTVISTSGFALENALSSVTAGMAFREASIIPEDKESIINAEIKNKALERLRKESITSIKTLETIASIVDDTLEKYKGAWFERNINKHSHLNQDAANELVQNSWNAIKTKIIRRELRGYALTAGWSLHPIVENKDSSKYTPAQKRGIREYVGSGYVDINNALLGLYNPDERTSILTASDIEKAIDNLDSAFKNGERLPKGITLYRSQRMLPSIYEAMVKNRVFYFRNFVSTSLYPNIFGTWMTDSSIGVLPDEKRLSVSIDKTDEGLVNSSDNLVGIGWVITGADKVNVVLPGGSLAPSNEMEVILPRGLMVKVNKITDASYNDGTVKTNNKLIQAEVMTTEELTESVIYDGDHLMETGELVTMTGDIEDRVDFASFVSSNVKQKVESSLGIIASCIDIANMPYKFVQG</sequence>
<protein>
    <recommendedName>
        <fullName evidence="1">NAD(+)--arginine ADP-ribosyltransferase</fullName>
        <ecNumber evidence="1 4 5">2.4.2.31</ecNumber>
    </recommendedName>
    <alternativeName>
        <fullName evidence="12">Alt protein</fullName>
    </alternativeName>
    <component>
        <recommendedName>
            <fullName>Mature NAD(+)--arginine ADP-ribosyltransferase</fullName>
        </recommendedName>
    </component>
</protein>
<reference key="1">
    <citation type="journal article" date="1989" name="Nucleic Acids Res.">
        <title>Nucleotide sequence of the alt gene of bacteriophage T4.</title>
        <authorList>
            <person name="Hilse D."/>
            <person name="Koch T."/>
            <person name="Rueger W."/>
        </authorList>
    </citation>
    <scope>NUCLEOTIDE SEQUENCE [GENOMIC DNA]</scope>
    <source>
        <strain>C</strain>
    </source>
</reference>
<reference key="2">
    <citation type="journal article" date="1994" name="Virology">
        <title>The ADP-ribosyltransferases (gpAlt) of bacteriophages T2, T4, and T6: sequencing of the genes and comparison of their products.</title>
        <authorList>
            <person name="Koch T."/>
            <person name="Rueger W."/>
        </authorList>
    </citation>
    <scope>SEQUENCE REVISION</scope>
    <scope>PROTEOLYTIC CLEAVAGE</scope>
</reference>
<reference key="3">
    <citation type="journal article" date="2003" name="Microbiol. Mol. Biol. Rev.">
        <title>Bacteriophage T4 genome.</title>
        <authorList>
            <person name="Miller E.S."/>
            <person name="Kutter E."/>
            <person name="Mosig G."/>
            <person name="Arisaka F."/>
            <person name="Kunisawa T."/>
            <person name="Ruger W."/>
        </authorList>
    </citation>
    <scope>NUCLEOTIDE SEQUENCE [LARGE SCALE GENOMIC DNA]</scope>
</reference>
<reference key="4">
    <citation type="journal article" date="1974" name="J. Mol. Biol.">
        <title>Bacteriophage T4 mutants deficient in alteration and modification of the Escherichia coli RNA polymerase.</title>
        <authorList>
            <person name="Horvitz H.R."/>
        </authorList>
    </citation>
    <scope>SUBCELLULAR LOCATION</scope>
</reference>
<reference key="5">
    <citation type="journal article" date="1979" name="J. Virol.">
        <title>Bacteriophage T4 alt gene maps between genes 30 and 54.</title>
        <authorList>
            <person name="Goff C.G."/>
        </authorList>
    </citation>
    <scope>SUBCELLULAR LOCATION</scope>
</reference>
<reference key="6">
    <citation type="journal article" date="1997" name="Adv. Exp. Med. Biol.">
        <title>ADP-ribosylation and early transcription regulation by bacteriophage T4.</title>
        <authorList>
            <person name="Wilkens K."/>
            <person name="Tiemann B."/>
            <person name="Bazan J.F."/>
            <person name="Rueger W."/>
        </authorList>
    </citation>
    <scope>FUNCTION</scope>
</reference>
<reference key="7">
    <citation type="journal article" date="1975" name="Eur. J. Biochem.">
        <title>ADP-ribosylation of DNA-dependent RNA polymerase of Escherichia coli by an NAD+: protein ADP-ribosyltransferase from bacteriophage T4.</title>
        <authorList>
            <person name="Rohrer H."/>
            <person name="Zillig W."/>
            <person name="Mailhammer R."/>
        </authorList>
    </citation>
    <scope>FUNCTION</scope>
    <scope>CATALYTIC ACTIVITY</scope>
    <scope>BIOPHYSICOCHEMICAL PROPERTIES</scope>
</reference>
<reference key="8">
    <citation type="journal article" date="2000" name="Microbiology">
        <title>T4 early promoter strength probed in vivo with unribosylated and ADP-ribosylated Escherichia coli RNA polymerase: a mutation analysis.</title>
        <authorList>
            <person name="Sommer N."/>
            <person name="Salniene V."/>
            <person name="Gineikiene E."/>
            <person name="Nivinskas R."/>
            <person name="Rueger W."/>
        </authorList>
    </citation>
    <scope>FUNCTION</scope>
</reference>
<reference key="9">
    <citation type="journal article" date="2005" name="Biochem. Biophys. Res. Commun.">
        <title>The mono-ADP-ribosyltransferases Alt and ModB of bacteriophage T4: target proteins identified.</title>
        <authorList>
            <person name="Depping R."/>
            <person name="Lohaus C."/>
            <person name="Meyer H.E."/>
            <person name="Ruger W."/>
        </authorList>
    </citation>
    <scope>FUNCTION</scope>
    <scope>CATALYTIC ACTIVITY</scope>
</reference>
<reference key="10">
    <citation type="journal article" date="2016" name="Mol. Microbiol.">
        <title>An ADP-ribosyltransferase Alt of bacteriophage T4 negatively regulates the Escherichia coli MazF toxin of a toxin-antitoxin module.</title>
        <authorList>
            <person name="Alawneh A.M."/>
            <person name="Qi D."/>
            <person name="Yonesaki T."/>
            <person name="Otsuka Y."/>
        </authorList>
    </citation>
    <scope>FUNCTION</scope>
</reference>
<reference key="11">
    <citation type="journal article" date="2022" name="Viruses">
        <title>The Beauty of Bacteriophage T4 Research: Lindsay W. Black and the T4 Head Assembly.</title>
        <authorList>
            <person name="Kuhn A."/>
            <person name="Thomas J.A."/>
        </authorList>
    </citation>
    <scope>PROTEOLYTIC CLEAVAGE</scope>
</reference>
<organism>
    <name type="scientific">Enterobacteria phage T4</name>
    <name type="common">Bacteriophage T4</name>
    <dbReference type="NCBI Taxonomy" id="10665"/>
    <lineage>
        <taxon>Viruses</taxon>
        <taxon>Duplodnaviria</taxon>
        <taxon>Heunggongvirae</taxon>
        <taxon>Uroviricota</taxon>
        <taxon>Caudoviricetes</taxon>
        <taxon>Straboviridae</taxon>
        <taxon>Tevenvirinae</taxon>
        <taxon>Tequatrovirus</taxon>
    </lineage>
</organism>
<comment type="function">
    <text evidence="1 3 4 5 6 10">ADP-ribosyltransferase that efficiently ADP-ribosylates one of the two alpha subunits of host RNA polymerase RPOA on an arginine located in the C-terminal region (PubMed:16112649, PubMed:173540). ADP-ribosylation of RPOA alpha subunit enhances the transcription of viral early genes (PubMed:11021939). Also ribosylates RPOA subunits beta, beta' and sigma 70 and performs an autoribosylation reaction (PubMed:173540, PubMed:9193638). Additional in-vitro identified targets include proteins involved in either translation or cellular metabolism such as elongation factor-Tu or GroeL (PubMed:16112649). Mono-ADP-ribosylates host MAZF which may inactivate the latter (PubMed:26395283).</text>
</comment>
<comment type="catalytic activity">
    <reaction evidence="1 4 5">
        <text>L-arginyl-[protein] + NAD(+) = N(omega)-(ADP-D-ribosyl)-L-arginyl-[protein] + nicotinamide + H(+)</text>
        <dbReference type="Rhea" id="RHEA:19149"/>
        <dbReference type="Rhea" id="RHEA-COMP:10532"/>
        <dbReference type="Rhea" id="RHEA-COMP:15087"/>
        <dbReference type="ChEBI" id="CHEBI:15378"/>
        <dbReference type="ChEBI" id="CHEBI:17154"/>
        <dbReference type="ChEBI" id="CHEBI:29965"/>
        <dbReference type="ChEBI" id="CHEBI:57540"/>
        <dbReference type="ChEBI" id="CHEBI:142554"/>
        <dbReference type="EC" id="2.4.2.31"/>
    </reaction>
    <physiologicalReaction direction="left-to-right" evidence="1 5">
        <dbReference type="Rhea" id="RHEA:19150"/>
    </physiologicalReaction>
</comment>
<comment type="biophysicochemical properties">
    <phDependence>
        <text evidence="5">Optimum pH is 7.5.</text>
    </phDependence>
    <temperatureDependence>
        <text evidence="5">Optimum temperature is 20 degrees Celsius.</text>
    </temperatureDependence>
</comment>
<comment type="subcellular location">
    <subcellularLocation>
        <location evidence="1 7 8">Virion</location>
    </subcellularLocation>
    <text evidence="1 7 8">About 25-50 copies per virion. This protein is injected into the bacterial cell along with the viral DNA.</text>
</comment>
<comment type="PTM">
    <text evidence="1 11">Proteolytic cleavages at the N- and C-termini by the prohead core protein protease give rise to the mature enzyme.</text>
</comment>
<comment type="similarity">
    <text evidence="1">Belongs to the Tevenvirinae NAD(+)--arginine ADP-ribosyltransferase family.</text>
</comment>
<proteinExistence type="evidence at protein level"/>
<name>ALT_BPT4</name>